<name>PSBA_RHDSA</name>
<evidence type="ECO:0000255" key="1">
    <source>
        <dbReference type="HAMAP-Rule" id="MF_01379"/>
    </source>
</evidence>
<evidence type="ECO:0007829" key="2">
    <source>
        <dbReference type="PDB" id="8XLP"/>
    </source>
</evidence>
<reference key="1">
    <citation type="journal article" date="2007" name="Mol. Biol. Evol.">
        <title>Plastid genome sequence of the cryptophyte alga Rhodomonas salina CCMP1319: lateral transfer of putative DNA replication machinery and a test of chromist plastid phylogeny.</title>
        <authorList>
            <person name="Khan H."/>
            <person name="Parks N."/>
            <person name="Kozera C."/>
            <person name="Curtis B.A."/>
            <person name="Parsons B.J."/>
            <person name="Bowman S."/>
            <person name="Archibald J.M."/>
        </authorList>
    </citation>
    <scope>NUCLEOTIDE SEQUENCE [LARGE SCALE GENOMIC DNA]</scope>
    <source>
        <strain>CCMP1319 / NEPCC76 / CS-174</strain>
    </source>
</reference>
<accession>A6MVT2</accession>
<sequence>MTATLERRESASLWERFCSWITSTDNRLYIGWFGVLMIPTLLTATTVYIIAFIAAPPVDIDGIREPVAGSLLYGNNIITGAVIPSSASIGIHFYPIWEAASLDEWLYNGGPYQLIVDHFLLGVCGWIGREWEFSYRLGMRPWISVAFTAPVAAASAVFLVYPIGQGSFSDGMPLGISGTFNFMLVFQAEHNILMHPFHQLGVAGVFGGSLFSAMHGSLVTSSLIRETTENESANYGYKFGQEEETYNIVAAHGYFGRLIFQYASFNNSRALHFFLGLWPVVGIWFTALGIMTMAFNLNGFNFNQSVVDSQGRVINTWADILNRANLGMEVMHERNAHNFPLDLAAGESLPVALTAPAVNG</sequence>
<geneLocation type="chloroplast"/>
<gene>
    <name evidence="1" type="primary">psbA</name>
</gene>
<organism>
    <name type="scientific">Rhodomonas salina</name>
    <name type="common">Cryptomonas salina</name>
    <dbReference type="NCBI Taxonomy" id="52970"/>
    <lineage>
        <taxon>Eukaryota</taxon>
        <taxon>Cryptophyceae</taxon>
        <taxon>Pyrenomonadales</taxon>
        <taxon>Pyrenomonadaceae</taxon>
        <taxon>Rhodomonas</taxon>
    </lineage>
</organism>
<protein>
    <recommendedName>
        <fullName evidence="1">Photosystem II protein D1</fullName>
        <shortName evidence="1">PSII D1 protein</shortName>
        <ecNumber evidence="1">1.10.3.9</ecNumber>
    </recommendedName>
    <alternativeName>
        <fullName evidence="1">Photosystem II Q(B) protein</fullName>
    </alternativeName>
</protein>
<comment type="function">
    <text evidence="1">Photosystem II (PSII) is a light-driven water:plastoquinone oxidoreductase that uses light energy to abstract electrons from H(2)O, generating O(2) and a proton gradient subsequently used for ATP formation. It consists of a core antenna complex that captures photons, and an electron transfer chain that converts photonic excitation into a charge separation. The D1/D2 (PsbA/PsbD) reaction center heterodimer binds P680, the primary electron donor of PSII as well as several subsequent electron acceptors.</text>
</comment>
<comment type="catalytic activity">
    <reaction evidence="1">
        <text>2 a plastoquinone + 4 hnu + 2 H2O = 2 a plastoquinol + O2</text>
        <dbReference type="Rhea" id="RHEA:36359"/>
        <dbReference type="Rhea" id="RHEA-COMP:9561"/>
        <dbReference type="Rhea" id="RHEA-COMP:9562"/>
        <dbReference type="ChEBI" id="CHEBI:15377"/>
        <dbReference type="ChEBI" id="CHEBI:15379"/>
        <dbReference type="ChEBI" id="CHEBI:17757"/>
        <dbReference type="ChEBI" id="CHEBI:30212"/>
        <dbReference type="ChEBI" id="CHEBI:62192"/>
        <dbReference type="EC" id="1.10.3.9"/>
    </reaction>
</comment>
<comment type="cofactor">
    <text evidence="1">The D1/D2 heterodimer binds P680, chlorophylls that are the primary electron donor of PSII, and subsequent electron acceptors. It shares a non-heme iron and each subunit binds pheophytin, quinone, additional chlorophylls, carotenoids and lipids. D1 provides most of the ligands for the Mn4-Ca-O5 cluster of the oxygen-evolving complex (OEC). There is also a Cl(-1) ion associated with D1 and D2, which is required for oxygen evolution. The PSII complex binds additional chlorophylls, carotenoids and specific lipids.</text>
</comment>
<comment type="subunit">
    <text evidence="1">PSII is composed of 1 copy each of membrane proteins PsbA, PsbB, PsbC, PsbD, PsbE, PsbF, PsbH, PsbI, PsbJ, PsbK, PsbL, PsbM, PsbT, PsbX, PsbY, PsbZ, Psb30/Ycf12, at least 3 peripheral proteins of the oxygen-evolving complex and a large number of cofactors. It forms dimeric complexes.</text>
</comment>
<comment type="subcellular location">
    <subcellularLocation>
        <location evidence="1">Plastid</location>
        <location evidence="1">Chloroplast thylakoid membrane</location>
        <topology evidence="1">Multi-pass membrane protein</topology>
    </subcellularLocation>
</comment>
<comment type="PTM">
    <text evidence="1">Tyr-161 forms a radical intermediate that is referred to as redox-active TyrZ, YZ or Y-Z.</text>
</comment>
<comment type="PTM">
    <text evidence="1">C-terminally processed by CTPA; processing is essential to allow assembly of the oxygen-evolving complex and thus photosynthetic growth.</text>
</comment>
<comment type="miscellaneous">
    <text evidence="1">2 of the reaction center chlorophylls (ChlD1 and ChlD2) are entirely coordinated by water.</text>
</comment>
<comment type="miscellaneous">
    <text evidence="1">Herbicides such as atrazine, BNT, diuron or ioxynil bind in the Q(B) binding site and block subsequent electron transfer.</text>
</comment>
<comment type="similarity">
    <text evidence="1">Belongs to the reaction center PufL/M/PsbA/D family.</text>
</comment>
<feature type="chain" id="PRO_0000340079" description="Photosystem II protein D1" evidence="1">
    <location>
        <begin position="1"/>
        <end position="344"/>
    </location>
</feature>
<feature type="propeptide" id="PRO_0000340080" evidence="1">
    <location>
        <begin position="345"/>
        <end position="360"/>
    </location>
</feature>
<feature type="transmembrane region" description="Helical" evidence="1">
    <location>
        <begin position="29"/>
        <end position="46"/>
    </location>
</feature>
<feature type="transmembrane region" description="Helical" evidence="1">
    <location>
        <begin position="118"/>
        <end position="133"/>
    </location>
</feature>
<feature type="transmembrane region" description="Helical" evidence="1">
    <location>
        <begin position="142"/>
        <end position="156"/>
    </location>
</feature>
<feature type="transmembrane region" description="Helical" evidence="1">
    <location>
        <begin position="197"/>
        <end position="218"/>
    </location>
</feature>
<feature type="transmembrane region" description="Helical" evidence="1">
    <location>
        <begin position="274"/>
        <end position="288"/>
    </location>
</feature>
<feature type="binding site" description="axial binding residue" evidence="1">
    <location>
        <position position="118"/>
    </location>
    <ligand>
        <name>chlorophyll a</name>
        <dbReference type="ChEBI" id="CHEBI:58416"/>
        <label>ChlzD1</label>
    </ligand>
    <ligandPart>
        <name>Mg</name>
        <dbReference type="ChEBI" id="CHEBI:25107"/>
    </ligandPart>
</feature>
<feature type="binding site" evidence="1">
    <location>
        <position position="126"/>
    </location>
    <ligand>
        <name>pheophytin a</name>
        <dbReference type="ChEBI" id="CHEBI:136840"/>
        <label>D1</label>
    </ligand>
</feature>
<feature type="binding site" evidence="1">
    <location>
        <position position="170"/>
    </location>
    <ligand>
        <name>[CaMn4O5] cluster</name>
        <dbReference type="ChEBI" id="CHEBI:189552"/>
    </ligand>
</feature>
<feature type="binding site" evidence="1">
    <location>
        <position position="189"/>
    </location>
    <ligand>
        <name>[CaMn4O5] cluster</name>
        <dbReference type="ChEBI" id="CHEBI:189552"/>
    </ligand>
</feature>
<feature type="binding site" description="axial binding residue" evidence="1">
    <location>
        <position position="198"/>
    </location>
    <ligand>
        <name>chlorophyll a</name>
        <dbReference type="ChEBI" id="CHEBI:58416"/>
        <label>PD1</label>
    </ligand>
    <ligandPart>
        <name>Mg</name>
        <dbReference type="ChEBI" id="CHEBI:25107"/>
    </ligandPart>
</feature>
<feature type="binding site" evidence="1">
    <location>
        <position position="215"/>
    </location>
    <ligand>
        <name>a quinone</name>
        <dbReference type="ChEBI" id="CHEBI:132124"/>
        <label>B</label>
    </ligand>
</feature>
<feature type="binding site" evidence="1">
    <location>
        <position position="215"/>
    </location>
    <ligand>
        <name>Fe cation</name>
        <dbReference type="ChEBI" id="CHEBI:24875"/>
        <note>ligand shared with heterodimeric partner</note>
    </ligand>
</feature>
<feature type="binding site" evidence="1">
    <location>
        <begin position="264"/>
        <end position="265"/>
    </location>
    <ligand>
        <name>a quinone</name>
        <dbReference type="ChEBI" id="CHEBI:132124"/>
        <label>B</label>
    </ligand>
</feature>
<feature type="binding site" evidence="1">
    <location>
        <position position="272"/>
    </location>
    <ligand>
        <name>Fe cation</name>
        <dbReference type="ChEBI" id="CHEBI:24875"/>
        <note>ligand shared with heterodimeric partner</note>
    </ligand>
</feature>
<feature type="binding site" evidence="1">
    <location>
        <position position="332"/>
    </location>
    <ligand>
        <name>[CaMn4O5] cluster</name>
        <dbReference type="ChEBI" id="CHEBI:189552"/>
    </ligand>
</feature>
<feature type="binding site" evidence="1">
    <location>
        <position position="333"/>
    </location>
    <ligand>
        <name>[CaMn4O5] cluster</name>
        <dbReference type="ChEBI" id="CHEBI:189552"/>
    </ligand>
</feature>
<feature type="binding site" evidence="1">
    <location>
        <position position="342"/>
    </location>
    <ligand>
        <name>[CaMn4O5] cluster</name>
        <dbReference type="ChEBI" id="CHEBI:189552"/>
    </ligand>
</feature>
<feature type="binding site" evidence="1">
    <location>
        <position position="344"/>
    </location>
    <ligand>
        <name>[CaMn4O5] cluster</name>
        <dbReference type="ChEBI" id="CHEBI:189552"/>
    </ligand>
</feature>
<feature type="site" description="Tyrosine radical intermediate" evidence="1">
    <location>
        <position position="161"/>
    </location>
</feature>
<feature type="site" description="Stabilizes free radical intermediate" evidence="1">
    <location>
        <position position="190"/>
    </location>
</feature>
<feature type="site" description="Cleavage; by CTPA" evidence="1">
    <location>
        <begin position="344"/>
        <end position="345"/>
    </location>
</feature>
<feature type="helix" evidence="2">
    <location>
        <begin position="13"/>
        <end position="21"/>
    </location>
</feature>
<feature type="strand" evidence="2">
    <location>
        <begin position="24"/>
        <end position="28"/>
    </location>
</feature>
<feature type="helix" evidence="2">
    <location>
        <begin position="31"/>
        <end position="54"/>
    </location>
</feature>
<feature type="strand" evidence="2">
    <location>
        <begin position="60"/>
        <end position="64"/>
    </location>
</feature>
<feature type="helix" evidence="2">
    <location>
        <begin position="71"/>
        <end position="73"/>
    </location>
</feature>
<feature type="turn" evidence="2">
    <location>
        <begin position="77"/>
        <end position="79"/>
    </location>
</feature>
<feature type="turn" evidence="2">
    <location>
        <begin position="87"/>
        <end position="91"/>
    </location>
</feature>
<feature type="helix" evidence="2">
    <location>
        <begin position="96"/>
        <end position="98"/>
    </location>
</feature>
<feature type="strand" evidence="2">
    <location>
        <begin position="99"/>
        <end position="101"/>
    </location>
</feature>
<feature type="helix" evidence="2">
    <location>
        <begin position="102"/>
        <end position="107"/>
    </location>
</feature>
<feature type="helix" evidence="2">
    <location>
        <begin position="110"/>
        <end position="137"/>
    </location>
</feature>
<feature type="helix" evidence="2">
    <location>
        <begin position="143"/>
        <end position="158"/>
    </location>
</feature>
<feature type="helix" evidence="2">
    <location>
        <begin position="160"/>
        <end position="165"/>
    </location>
</feature>
<feature type="helix" evidence="2">
    <location>
        <begin position="168"/>
        <end position="170"/>
    </location>
</feature>
<feature type="strand" evidence="2">
    <location>
        <begin position="174"/>
        <end position="176"/>
    </location>
</feature>
<feature type="helix" evidence="2">
    <location>
        <begin position="177"/>
        <end position="190"/>
    </location>
</feature>
<feature type="helix" evidence="2">
    <location>
        <begin position="192"/>
        <end position="194"/>
    </location>
</feature>
<feature type="helix" evidence="2">
    <location>
        <begin position="196"/>
        <end position="221"/>
    </location>
</feature>
<feature type="helix" evidence="2">
    <location>
        <begin position="233"/>
        <end position="236"/>
    </location>
</feature>
<feature type="helix" evidence="2">
    <location>
        <begin position="248"/>
        <end position="258"/>
    </location>
</feature>
<feature type="helix" evidence="2">
    <location>
        <begin position="268"/>
        <end position="294"/>
    </location>
</feature>
<feature type="helix" evidence="2">
    <location>
        <begin position="317"/>
        <end position="332"/>
    </location>
</feature>
<proteinExistence type="evidence at protein level"/>
<keyword id="KW-0002">3D-structure</keyword>
<keyword id="KW-0106">Calcium</keyword>
<keyword id="KW-0148">Chlorophyll</keyword>
<keyword id="KW-0150">Chloroplast</keyword>
<keyword id="KW-0157">Chromophore</keyword>
<keyword id="KW-0249">Electron transport</keyword>
<keyword id="KW-0359">Herbicide resistance</keyword>
<keyword id="KW-0408">Iron</keyword>
<keyword id="KW-0460">Magnesium</keyword>
<keyword id="KW-0464">Manganese</keyword>
<keyword id="KW-0472">Membrane</keyword>
<keyword id="KW-0479">Metal-binding</keyword>
<keyword id="KW-0560">Oxidoreductase</keyword>
<keyword id="KW-0602">Photosynthesis</keyword>
<keyword id="KW-0604">Photosystem II</keyword>
<keyword id="KW-0934">Plastid</keyword>
<keyword id="KW-0793">Thylakoid</keyword>
<keyword id="KW-0812">Transmembrane</keyword>
<keyword id="KW-1133">Transmembrane helix</keyword>
<keyword id="KW-0813">Transport</keyword>
<dbReference type="EC" id="1.10.3.9" evidence="1"/>
<dbReference type="EMBL" id="EF508371">
    <property type="protein sequence ID" value="ABO70840.1"/>
    <property type="molecule type" value="Genomic_DNA"/>
</dbReference>
<dbReference type="RefSeq" id="YP_001293511.1">
    <property type="nucleotide sequence ID" value="NC_009573.1"/>
</dbReference>
<dbReference type="PDB" id="8XLP">
    <property type="method" value="EM"/>
    <property type="resolution" value="2.57 A"/>
    <property type="chains" value="A/a=9-336"/>
</dbReference>
<dbReference type="PDBsum" id="8XLP"/>
<dbReference type="EMDB" id="EMD-38455"/>
<dbReference type="SMR" id="A6MVT2"/>
<dbReference type="GeneID" id="5228604"/>
<dbReference type="GO" id="GO:0009535">
    <property type="term" value="C:chloroplast thylakoid membrane"/>
    <property type="evidence" value="ECO:0007669"/>
    <property type="project" value="UniProtKB-SubCell"/>
</dbReference>
<dbReference type="GO" id="GO:0009523">
    <property type="term" value="C:photosystem II"/>
    <property type="evidence" value="ECO:0007669"/>
    <property type="project" value="UniProtKB-KW"/>
</dbReference>
<dbReference type="GO" id="GO:0016168">
    <property type="term" value="F:chlorophyll binding"/>
    <property type="evidence" value="ECO:0007669"/>
    <property type="project" value="UniProtKB-UniRule"/>
</dbReference>
<dbReference type="GO" id="GO:0045156">
    <property type="term" value="F:electron transporter, transferring electrons within the cyclic electron transport pathway of photosynthesis activity"/>
    <property type="evidence" value="ECO:0007669"/>
    <property type="project" value="InterPro"/>
</dbReference>
<dbReference type="GO" id="GO:0005506">
    <property type="term" value="F:iron ion binding"/>
    <property type="evidence" value="ECO:0007669"/>
    <property type="project" value="UniProtKB-UniRule"/>
</dbReference>
<dbReference type="GO" id="GO:0016682">
    <property type="term" value="F:oxidoreductase activity, acting on diphenols and related substances as donors, oxygen as acceptor"/>
    <property type="evidence" value="ECO:0007669"/>
    <property type="project" value="UniProtKB-UniRule"/>
</dbReference>
<dbReference type="GO" id="GO:0009772">
    <property type="term" value="P:photosynthetic electron transport in photosystem II"/>
    <property type="evidence" value="ECO:0007669"/>
    <property type="project" value="InterPro"/>
</dbReference>
<dbReference type="GO" id="GO:0009635">
    <property type="term" value="P:response to herbicide"/>
    <property type="evidence" value="ECO:0007669"/>
    <property type="project" value="UniProtKB-KW"/>
</dbReference>
<dbReference type="CDD" id="cd09289">
    <property type="entry name" value="Photosystem-II_D1"/>
    <property type="match status" value="1"/>
</dbReference>
<dbReference type="FunFam" id="1.20.85.10:FF:000002">
    <property type="entry name" value="Photosystem II protein D1"/>
    <property type="match status" value="1"/>
</dbReference>
<dbReference type="Gene3D" id="1.20.85.10">
    <property type="entry name" value="Photosystem II protein D1-like"/>
    <property type="match status" value="1"/>
</dbReference>
<dbReference type="HAMAP" id="MF_01379">
    <property type="entry name" value="PSII_PsbA_D1"/>
    <property type="match status" value="1"/>
</dbReference>
<dbReference type="InterPro" id="IPR055266">
    <property type="entry name" value="D1/D2"/>
</dbReference>
<dbReference type="InterPro" id="IPR036854">
    <property type="entry name" value="Photo_II_D1/D2_sf"/>
</dbReference>
<dbReference type="InterPro" id="IPR000484">
    <property type="entry name" value="Photo_RC_L/M"/>
</dbReference>
<dbReference type="InterPro" id="IPR055265">
    <property type="entry name" value="Photo_RC_L/M_CS"/>
</dbReference>
<dbReference type="InterPro" id="IPR005867">
    <property type="entry name" value="PSII_D1"/>
</dbReference>
<dbReference type="NCBIfam" id="TIGR01151">
    <property type="entry name" value="psbA"/>
    <property type="match status" value="1"/>
</dbReference>
<dbReference type="PANTHER" id="PTHR33149:SF12">
    <property type="entry name" value="PHOTOSYSTEM II D2 PROTEIN"/>
    <property type="match status" value="1"/>
</dbReference>
<dbReference type="PANTHER" id="PTHR33149">
    <property type="entry name" value="PHOTOSYSTEM II PROTEIN D1"/>
    <property type="match status" value="1"/>
</dbReference>
<dbReference type="Pfam" id="PF00124">
    <property type="entry name" value="Photo_RC"/>
    <property type="match status" value="1"/>
</dbReference>
<dbReference type="PRINTS" id="PR00256">
    <property type="entry name" value="REACTNCENTRE"/>
</dbReference>
<dbReference type="SUPFAM" id="SSF81483">
    <property type="entry name" value="Bacterial photosystem II reaction centre, L and M subunits"/>
    <property type="match status" value="1"/>
</dbReference>
<dbReference type="PROSITE" id="PS00244">
    <property type="entry name" value="REACTION_CENTER"/>
    <property type="match status" value="1"/>
</dbReference>